<dbReference type="EC" id="4.2.1.9" evidence="1"/>
<dbReference type="EMBL" id="CP000781">
    <property type="protein sequence ID" value="ABS65329.1"/>
    <property type="molecule type" value="Genomic_DNA"/>
</dbReference>
<dbReference type="SMR" id="A7IBD6"/>
<dbReference type="STRING" id="78245.Xaut_0070"/>
<dbReference type="KEGG" id="xau:Xaut_0070"/>
<dbReference type="eggNOG" id="COG0129">
    <property type="taxonomic scope" value="Bacteria"/>
</dbReference>
<dbReference type="HOGENOM" id="CLU_014271_4_2_5"/>
<dbReference type="OrthoDB" id="9807077at2"/>
<dbReference type="PhylomeDB" id="A7IBD6"/>
<dbReference type="UniPathway" id="UPA00047">
    <property type="reaction ID" value="UER00057"/>
</dbReference>
<dbReference type="UniPathway" id="UPA00049">
    <property type="reaction ID" value="UER00061"/>
</dbReference>
<dbReference type="Proteomes" id="UP000002417">
    <property type="component" value="Chromosome"/>
</dbReference>
<dbReference type="GO" id="GO:0005829">
    <property type="term" value="C:cytosol"/>
    <property type="evidence" value="ECO:0007669"/>
    <property type="project" value="TreeGrafter"/>
</dbReference>
<dbReference type="GO" id="GO:0051537">
    <property type="term" value="F:2 iron, 2 sulfur cluster binding"/>
    <property type="evidence" value="ECO:0007669"/>
    <property type="project" value="UniProtKB-UniRule"/>
</dbReference>
<dbReference type="GO" id="GO:0004160">
    <property type="term" value="F:dihydroxy-acid dehydratase activity"/>
    <property type="evidence" value="ECO:0007669"/>
    <property type="project" value="UniProtKB-UniRule"/>
</dbReference>
<dbReference type="GO" id="GO:0000287">
    <property type="term" value="F:magnesium ion binding"/>
    <property type="evidence" value="ECO:0007669"/>
    <property type="project" value="UniProtKB-UniRule"/>
</dbReference>
<dbReference type="GO" id="GO:0009097">
    <property type="term" value="P:isoleucine biosynthetic process"/>
    <property type="evidence" value="ECO:0007669"/>
    <property type="project" value="UniProtKB-UniRule"/>
</dbReference>
<dbReference type="GO" id="GO:0009099">
    <property type="term" value="P:L-valine biosynthetic process"/>
    <property type="evidence" value="ECO:0007669"/>
    <property type="project" value="UniProtKB-UniRule"/>
</dbReference>
<dbReference type="FunFam" id="3.50.30.80:FF:000001">
    <property type="entry name" value="Dihydroxy-acid dehydratase"/>
    <property type="match status" value="1"/>
</dbReference>
<dbReference type="Gene3D" id="3.50.30.80">
    <property type="entry name" value="IlvD/EDD C-terminal domain-like"/>
    <property type="match status" value="1"/>
</dbReference>
<dbReference type="HAMAP" id="MF_00012">
    <property type="entry name" value="IlvD"/>
    <property type="match status" value="1"/>
</dbReference>
<dbReference type="InterPro" id="IPR042096">
    <property type="entry name" value="Dihydro-acid_dehy_C"/>
</dbReference>
<dbReference type="InterPro" id="IPR004404">
    <property type="entry name" value="DihydroxyA_deHydtase"/>
</dbReference>
<dbReference type="InterPro" id="IPR020558">
    <property type="entry name" value="DiOHA_6PGluconate_deHydtase_CS"/>
</dbReference>
<dbReference type="InterPro" id="IPR056740">
    <property type="entry name" value="ILV_EDD_C"/>
</dbReference>
<dbReference type="InterPro" id="IPR000581">
    <property type="entry name" value="ILV_EDD_N"/>
</dbReference>
<dbReference type="InterPro" id="IPR037237">
    <property type="entry name" value="IlvD/EDD_N"/>
</dbReference>
<dbReference type="NCBIfam" id="TIGR00110">
    <property type="entry name" value="ilvD"/>
    <property type="match status" value="1"/>
</dbReference>
<dbReference type="NCBIfam" id="NF009103">
    <property type="entry name" value="PRK12448.1"/>
    <property type="match status" value="1"/>
</dbReference>
<dbReference type="PANTHER" id="PTHR43661">
    <property type="entry name" value="D-XYLONATE DEHYDRATASE"/>
    <property type="match status" value="1"/>
</dbReference>
<dbReference type="PANTHER" id="PTHR43661:SF3">
    <property type="entry name" value="D-XYLONATE DEHYDRATASE YAGF-RELATED"/>
    <property type="match status" value="1"/>
</dbReference>
<dbReference type="Pfam" id="PF24877">
    <property type="entry name" value="ILV_EDD_C"/>
    <property type="match status" value="1"/>
</dbReference>
<dbReference type="Pfam" id="PF00920">
    <property type="entry name" value="ILVD_EDD_N"/>
    <property type="match status" value="1"/>
</dbReference>
<dbReference type="SUPFAM" id="SSF143975">
    <property type="entry name" value="IlvD/EDD N-terminal domain-like"/>
    <property type="match status" value="1"/>
</dbReference>
<dbReference type="SUPFAM" id="SSF52016">
    <property type="entry name" value="LeuD/IlvD-like"/>
    <property type="match status" value="1"/>
</dbReference>
<dbReference type="PROSITE" id="PS00886">
    <property type="entry name" value="ILVD_EDD_1"/>
    <property type="match status" value="1"/>
</dbReference>
<dbReference type="PROSITE" id="PS00887">
    <property type="entry name" value="ILVD_EDD_2"/>
    <property type="match status" value="1"/>
</dbReference>
<gene>
    <name evidence="1" type="primary">ilvD</name>
    <name type="ordered locus">Xaut_0070</name>
</gene>
<proteinExistence type="inferred from homology"/>
<reference key="1">
    <citation type="submission" date="2007-07" db="EMBL/GenBank/DDBJ databases">
        <title>Complete sequence of chromosome of Xanthobacter autotrophicus Py2.</title>
        <authorList>
            <consortium name="US DOE Joint Genome Institute"/>
            <person name="Copeland A."/>
            <person name="Lucas S."/>
            <person name="Lapidus A."/>
            <person name="Barry K."/>
            <person name="Glavina del Rio T."/>
            <person name="Hammon N."/>
            <person name="Israni S."/>
            <person name="Dalin E."/>
            <person name="Tice H."/>
            <person name="Pitluck S."/>
            <person name="Sims D."/>
            <person name="Brettin T."/>
            <person name="Bruce D."/>
            <person name="Detter J.C."/>
            <person name="Han C."/>
            <person name="Tapia R."/>
            <person name="Brainard J."/>
            <person name="Schmutz J."/>
            <person name="Larimer F."/>
            <person name="Land M."/>
            <person name="Hauser L."/>
            <person name="Kyrpides N."/>
            <person name="Kim E."/>
            <person name="Ensigns S.A."/>
            <person name="Richardson P."/>
        </authorList>
    </citation>
    <scope>NUCLEOTIDE SEQUENCE [LARGE SCALE GENOMIC DNA]</scope>
    <source>
        <strain>ATCC BAA-1158 / Py2</strain>
    </source>
</reference>
<protein>
    <recommendedName>
        <fullName evidence="1">Dihydroxy-acid dehydratase</fullName>
        <shortName evidence="1">DAD</shortName>
        <ecNumber evidence="1">4.2.1.9</ecNumber>
    </recommendedName>
</protein>
<feature type="chain" id="PRO_1000089431" description="Dihydroxy-acid dehydratase">
    <location>
        <begin position="1"/>
        <end position="617"/>
    </location>
</feature>
<feature type="active site" description="Proton acceptor" evidence="1">
    <location>
        <position position="518"/>
    </location>
</feature>
<feature type="binding site" evidence="1">
    <location>
        <position position="81"/>
    </location>
    <ligand>
        <name>Mg(2+)</name>
        <dbReference type="ChEBI" id="CHEBI:18420"/>
    </ligand>
</feature>
<feature type="binding site" evidence="1">
    <location>
        <position position="122"/>
    </location>
    <ligand>
        <name>[2Fe-2S] cluster</name>
        <dbReference type="ChEBI" id="CHEBI:190135"/>
    </ligand>
</feature>
<feature type="binding site" evidence="1">
    <location>
        <position position="123"/>
    </location>
    <ligand>
        <name>Mg(2+)</name>
        <dbReference type="ChEBI" id="CHEBI:18420"/>
    </ligand>
</feature>
<feature type="binding site" description="via carbamate group" evidence="1">
    <location>
        <position position="124"/>
    </location>
    <ligand>
        <name>Mg(2+)</name>
        <dbReference type="ChEBI" id="CHEBI:18420"/>
    </ligand>
</feature>
<feature type="binding site" evidence="1">
    <location>
        <position position="195"/>
    </location>
    <ligand>
        <name>[2Fe-2S] cluster</name>
        <dbReference type="ChEBI" id="CHEBI:190135"/>
    </ligand>
</feature>
<feature type="binding site" evidence="1">
    <location>
        <position position="492"/>
    </location>
    <ligand>
        <name>Mg(2+)</name>
        <dbReference type="ChEBI" id="CHEBI:18420"/>
    </ligand>
</feature>
<feature type="modified residue" description="N6-carboxylysine" evidence="1">
    <location>
        <position position="124"/>
    </location>
</feature>
<organism>
    <name type="scientific">Xanthobacter autotrophicus (strain ATCC BAA-1158 / Py2)</name>
    <dbReference type="NCBI Taxonomy" id="78245"/>
    <lineage>
        <taxon>Bacteria</taxon>
        <taxon>Pseudomonadati</taxon>
        <taxon>Pseudomonadota</taxon>
        <taxon>Alphaproteobacteria</taxon>
        <taxon>Hyphomicrobiales</taxon>
        <taxon>Xanthobacteraceae</taxon>
        <taxon>Xanthobacter</taxon>
    </lineage>
</organism>
<evidence type="ECO:0000255" key="1">
    <source>
        <dbReference type="HAMAP-Rule" id="MF_00012"/>
    </source>
</evidence>
<keyword id="KW-0001">2Fe-2S</keyword>
<keyword id="KW-0028">Amino-acid biosynthesis</keyword>
<keyword id="KW-0100">Branched-chain amino acid biosynthesis</keyword>
<keyword id="KW-0408">Iron</keyword>
<keyword id="KW-0411">Iron-sulfur</keyword>
<keyword id="KW-0456">Lyase</keyword>
<keyword id="KW-0460">Magnesium</keyword>
<keyword id="KW-0479">Metal-binding</keyword>
<keyword id="KW-1185">Reference proteome</keyword>
<name>ILVD_XANP2</name>
<comment type="function">
    <text evidence="1">Functions in the biosynthesis of branched-chain amino acids. Catalyzes the dehydration of (2R,3R)-2,3-dihydroxy-3-methylpentanoate (2,3-dihydroxy-3-methylvalerate) into 2-oxo-3-methylpentanoate (2-oxo-3-methylvalerate) and of (2R)-2,3-dihydroxy-3-methylbutanoate (2,3-dihydroxyisovalerate) into 2-oxo-3-methylbutanoate (2-oxoisovalerate), the penultimate precursor to L-isoleucine and L-valine, respectively.</text>
</comment>
<comment type="catalytic activity">
    <reaction evidence="1">
        <text>(2R)-2,3-dihydroxy-3-methylbutanoate = 3-methyl-2-oxobutanoate + H2O</text>
        <dbReference type="Rhea" id="RHEA:24809"/>
        <dbReference type="ChEBI" id="CHEBI:11851"/>
        <dbReference type="ChEBI" id="CHEBI:15377"/>
        <dbReference type="ChEBI" id="CHEBI:49072"/>
        <dbReference type="EC" id="4.2.1.9"/>
    </reaction>
    <physiologicalReaction direction="left-to-right" evidence="1">
        <dbReference type="Rhea" id="RHEA:24810"/>
    </physiologicalReaction>
</comment>
<comment type="catalytic activity">
    <reaction evidence="1">
        <text>(2R,3R)-2,3-dihydroxy-3-methylpentanoate = (S)-3-methyl-2-oxopentanoate + H2O</text>
        <dbReference type="Rhea" id="RHEA:27694"/>
        <dbReference type="ChEBI" id="CHEBI:15377"/>
        <dbReference type="ChEBI" id="CHEBI:35146"/>
        <dbReference type="ChEBI" id="CHEBI:49258"/>
        <dbReference type="EC" id="4.2.1.9"/>
    </reaction>
    <physiologicalReaction direction="left-to-right" evidence="1">
        <dbReference type="Rhea" id="RHEA:27695"/>
    </physiologicalReaction>
</comment>
<comment type="cofactor">
    <cofactor evidence="1">
        <name>[2Fe-2S] cluster</name>
        <dbReference type="ChEBI" id="CHEBI:190135"/>
    </cofactor>
    <text evidence="1">Binds 1 [2Fe-2S] cluster per subunit. This cluster acts as a Lewis acid cofactor.</text>
</comment>
<comment type="cofactor">
    <cofactor evidence="1">
        <name>Mg(2+)</name>
        <dbReference type="ChEBI" id="CHEBI:18420"/>
    </cofactor>
</comment>
<comment type="pathway">
    <text evidence="1">Amino-acid biosynthesis; L-isoleucine biosynthesis; L-isoleucine from 2-oxobutanoate: step 3/4.</text>
</comment>
<comment type="pathway">
    <text evidence="1">Amino-acid biosynthesis; L-valine biosynthesis; L-valine from pyruvate: step 3/4.</text>
</comment>
<comment type="subunit">
    <text evidence="1">Homodimer.</text>
</comment>
<comment type="similarity">
    <text evidence="1">Belongs to the IlvD/Edd family.</text>
</comment>
<sequence length="617" mass="65562">MPQYRSRTSTHGRNMAGARGLWRATGMKDGDFGKPIIAVVNSFTQFVPGHVHLKDLGQLVAREIEKAGGVAKEFNTIAVDDGIAMGHDGMLYSLPSREIIADSVEYMVNAHCADAMVCISNCDKITPGMLMAAMRLNIPAVFVSGGPMEAGKVLLSTGEKKVDLIDAMIAAADDKVTDADVQVMERSACPTCGSCSGMFTANSMNCLTEALGLALPGNGSTLATHADRERLFVEAGHLIVDLARRYYEQDDASVLPRSVASFKAFENAMTLDISMGGSTNTVLHLLAAANEGEVPFTMADIDRLSRRVPVLCKVAPAVANIHMEDVHRAGGIMAILGELDRGGLIHTDLPTVHAATMADALDRWDVKRTKSESVATFFRAAPGGVPTQVAFSQSRRWDDLDLDRETGVIRDVAHAYSKDGGLAVLYGNIALDGCIVKTAGVDASILKFTGKARIFESQDAAVEAILSTGRIQAGDVVLIRYEGPRGGPGMQEMLYPTSYLKSKGLGKACALVTDGRFSGGSSGLSIGHVSPEAAEGGAIGLVEEGDTIEIDIPNRIIRVAVSDEVLSQRRAAMEAKGDAAWKPADRKRVVSQALQAYAALTTSAARGAVRDVSRLRR</sequence>
<accession>A7IBD6</accession>